<feature type="chain" id="PRO_0000077889" description="Uncharacterized protein HI_0101">
    <location>
        <begin position="1"/>
        <end position="146"/>
    </location>
</feature>
<sequence length="146" mass="16836">MKLTPEMLTGKSREHLVNLPTTHSSNHFLQTQAVQAFQALQQSAAKNGFNLQPASSFRDFERQQLIWNSKFKGERKVHDDAGKALDLNQLDDWQKCQAILRWSALLRLVVIIGERKWIFLILIFCHEVNLYNWSLGNMKKAATSLN</sequence>
<dbReference type="EMBL" id="L42023">
    <property type="protein sequence ID" value="AAC21782.1"/>
    <property type="molecule type" value="Genomic_DNA"/>
</dbReference>
<dbReference type="PIR" id="E64001">
    <property type="entry name" value="E64001"/>
</dbReference>
<dbReference type="STRING" id="71421.HI_0101"/>
<dbReference type="MEROPS" id="M15.024"/>
<dbReference type="EnsemblBacteria" id="AAC21782">
    <property type="protein sequence ID" value="AAC21782"/>
    <property type="gene ID" value="HI_0101"/>
</dbReference>
<dbReference type="KEGG" id="hin:HI_0101"/>
<dbReference type="eggNOG" id="COG1876">
    <property type="taxonomic scope" value="Bacteria"/>
</dbReference>
<dbReference type="HOGENOM" id="CLU_1774800_0_0_6"/>
<dbReference type="Proteomes" id="UP000000579">
    <property type="component" value="Chromosome"/>
</dbReference>
<dbReference type="GO" id="GO:0008233">
    <property type="term" value="F:peptidase activity"/>
    <property type="evidence" value="ECO:0007669"/>
    <property type="project" value="InterPro"/>
</dbReference>
<dbReference type="GO" id="GO:0006508">
    <property type="term" value="P:proteolysis"/>
    <property type="evidence" value="ECO:0007669"/>
    <property type="project" value="InterPro"/>
</dbReference>
<dbReference type="Gene3D" id="3.30.1380.10">
    <property type="match status" value="1"/>
</dbReference>
<dbReference type="InterPro" id="IPR052179">
    <property type="entry name" value="Bact_PeptidoProc_Enz"/>
</dbReference>
<dbReference type="InterPro" id="IPR009045">
    <property type="entry name" value="Hedgehog_sig/DD-Pept_Zn-bd_sf"/>
</dbReference>
<dbReference type="InterPro" id="IPR003709">
    <property type="entry name" value="Pept_M15B"/>
</dbReference>
<dbReference type="PANTHER" id="PTHR34385">
    <property type="entry name" value="D-ALANYL-D-ALANINE CARBOXYPEPTIDASE"/>
    <property type="match status" value="1"/>
</dbReference>
<dbReference type="PANTHER" id="PTHR34385:SF1">
    <property type="entry name" value="PEPTIDOGLYCAN L-ALANYL-D-GLUTAMATE ENDOPEPTIDASE CWLK"/>
    <property type="match status" value="1"/>
</dbReference>
<dbReference type="Pfam" id="PF02557">
    <property type="entry name" value="VanY"/>
    <property type="match status" value="1"/>
</dbReference>
<dbReference type="SUPFAM" id="SSF55166">
    <property type="entry name" value="Hedgehog/DD-peptidase"/>
    <property type="match status" value="1"/>
</dbReference>
<protein>
    <recommendedName>
        <fullName>Uncharacterized protein HI_0101</fullName>
    </recommendedName>
</protein>
<proteinExistence type="predicted"/>
<accession>P43942</accession>
<name>Y101_HAEIN</name>
<keyword id="KW-1185">Reference proteome</keyword>
<organism>
    <name type="scientific">Haemophilus influenzae (strain ATCC 51907 / DSM 11121 / KW20 / Rd)</name>
    <dbReference type="NCBI Taxonomy" id="71421"/>
    <lineage>
        <taxon>Bacteria</taxon>
        <taxon>Pseudomonadati</taxon>
        <taxon>Pseudomonadota</taxon>
        <taxon>Gammaproteobacteria</taxon>
        <taxon>Pasteurellales</taxon>
        <taxon>Pasteurellaceae</taxon>
        <taxon>Haemophilus</taxon>
    </lineage>
</organism>
<reference key="1">
    <citation type="journal article" date="1995" name="Science">
        <title>Whole-genome random sequencing and assembly of Haemophilus influenzae Rd.</title>
        <authorList>
            <person name="Fleischmann R.D."/>
            <person name="Adams M.D."/>
            <person name="White O."/>
            <person name="Clayton R.A."/>
            <person name="Kirkness E.F."/>
            <person name="Kerlavage A.R."/>
            <person name="Bult C.J."/>
            <person name="Tomb J.-F."/>
            <person name="Dougherty B.A."/>
            <person name="Merrick J.M."/>
            <person name="McKenney K."/>
            <person name="Sutton G.G."/>
            <person name="FitzHugh W."/>
            <person name="Fields C.A."/>
            <person name="Gocayne J.D."/>
            <person name="Scott J.D."/>
            <person name="Shirley R."/>
            <person name="Liu L.-I."/>
            <person name="Glodek A."/>
            <person name="Kelley J.M."/>
            <person name="Weidman J.F."/>
            <person name="Phillips C.A."/>
            <person name="Spriggs T."/>
            <person name="Hedblom E."/>
            <person name="Cotton M.D."/>
            <person name="Utterback T.R."/>
            <person name="Hanna M.C."/>
            <person name="Nguyen D.T."/>
            <person name="Saudek D.M."/>
            <person name="Brandon R.C."/>
            <person name="Fine L.D."/>
            <person name="Fritchman J.L."/>
            <person name="Fuhrmann J.L."/>
            <person name="Geoghagen N.S.M."/>
            <person name="Gnehm C.L."/>
            <person name="McDonald L.A."/>
            <person name="Small K.V."/>
            <person name="Fraser C.M."/>
            <person name="Smith H.O."/>
            <person name="Venter J.C."/>
        </authorList>
    </citation>
    <scope>NUCLEOTIDE SEQUENCE [LARGE SCALE GENOMIC DNA]</scope>
    <source>
        <strain>ATCC 51907 / DSM 11121 / KW20 / Rd</strain>
    </source>
</reference>
<gene>
    <name type="ordered locus">HI_0101</name>
</gene>